<comment type="catalytic activity">
    <reaction evidence="1">
        <text>tRNA(Lys) + L-lysine + ATP = L-lysyl-tRNA(Lys) + AMP + diphosphate</text>
        <dbReference type="Rhea" id="RHEA:20792"/>
        <dbReference type="Rhea" id="RHEA-COMP:9696"/>
        <dbReference type="Rhea" id="RHEA-COMP:9697"/>
        <dbReference type="ChEBI" id="CHEBI:30616"/>
        <dbReference type="ChEBI" id="CHEBI:32551"/>
        <dbReference type="ChEBI" id="CHEBI:33019"/>
        <dbReference type="ChEBI" id="CHEBI:78442"/>
        <dbReference type="ChEBI" id="CHEBI:78529"/>
        <dbReference type="ChEBI" id="CHEBI:456215"/>
        <dbReference type="EC" id="6.1.1.6"/>
    </reaction>
</comment>
<comment type="cofactor">
    <cofactor evidence="1">
        <name>Mg(2+)</name>
        <dbReference type="ChEBI" id="CHEBI:18420"/>
    </cofactor>
    <text evidence="1">Binds 3 Mg(2+) ions per subunit.</text>
</comment>
<comment type="subunit">
    <text evidence="1">Homodimer.</text>
</comment>
<comment type="subcellular location">
    <subcellularLocation>
        <location evidence="1">Cytoplasm</location>
    </subcellularLocation>
</comment>
<comment type="similarity">
    <text evidence="1">Belongs to the class-II aminoacyl-tRNA synthetase family.</text>
</comment>
<evidence type="ECO:0000255" key="1">
    <source>
        <dbReference type="HAMAP-Rule" id="MF_00252"/>
    </source>
</evidence>
<proteinExistence type="inferred from homology"/>
<name>SYK_STRTD</name>
<sequence length="496" mass="56439">MPNQHMEELNDQQIVRREKMAALAEQGIDPFGKRFERTATSGQLKEKYADKTKEELHEINETATIAGRLMTKRGKGKVGFAHIQDRDGQIQIYVRKDAVGEENYEIFKKADLGDFLGVEGEVMRTDMGELSIKATHITHLSKALRPLPEKFHGLSDIETIYRKRYLDLISNRESFDRFVTRSKIISEIRRYLDAQGFLEVETPVLHNEAGGAAAKPFITHHNAQNIDMVLRIALELHLKRLIVGGMERVYEIGRIFRNEGMDATHNPEFTMIEVYQAYADFHDIMDLTEGIIQHAAKAVKGDGPVNYQGTEIKINEPFKRIHMVDAIKEITGVDFWQDMTFEEAVALANEKHVPVEKHYTEVGQIINAFFEEFVEETLTQPTFVYGHPVAVSPLAKKNPEDPRFTDRFELFIMTKEYGNAYSELNDPIDQLSRFEAQAAAKELGDDEATGIDYDYVEALEYGMPPTGGLGIGIDRLCMLLTDTTTIRDVLLFPTMK</sequence>
<organism>
    <name type="scientific">Streptococcus thermophilus (strain ATCC BAA-491 / LMD-9)</name>
    <dbReference type="NCBI Taxonomy" id="322159"/>
    <lineage>
        <taxon>Bacteria</taxon>
        <taxon>Bacillati</taxon>
        <taxon>Bacillota</taxon>
        <taxon>Bacilli</taxon>
        <taxon>Lactobacillales</taxon>
        <taxon>Streptococcaceae</taxon>
        <taxon>Streptococcus</taxon>
    </lineage>
</organism>
<accession>Q03LD3</accession>
<protein>
    <recommendedName>
        <fullName evidence="1">Lysine--tRNA ligase</fullName>
        <ecNumber evidence="1">6.1.1.6</ecNumber>
    </recommendedName>
    <alternativeName>
        <fullName evidence="1">Lysyl-tRNA synthetase</fullName>
        <shortName evidence="1">LysRS</shortName>
    </alternativeName>
</protein>
<gene>
    <name evidence="1" type="primary">lysS</name>
    <name type="ordered locus">STER_0733</name>
</gene>
<feature type="chain" id="PRO_1000012951" description="Lysine--tRNA ligase">
    <location>
        <begin position="1"/>
        <end position="496"/>
    </location>
</feature>
<feature type="binding site" evidence="1">
    <location>
        <position position="409"/>
    </location>
    <ligand>
        <name>Mg(2+)</name>
        <dbReference type="ChEBI" id="CHEBI:18420"/>
        <label>1</label>
    </ligand>
</feature>
<feature type="binding site" evidence="1">
    <location>
        <position position="416"/>
    </location>
    <ligand>
        <name>Mg(2+)</name>
        <dbReference type="ChEBI" id="CHEBI:18420"/>
        <label>1</label>
    </ligand>
</feature>
<feature type="binding site" evidence="1">
    <location>
        <position position="416"/>
    </location>
    <ligand>
        <name>Mg(2+)</name>
        <dbReference type="ChEBI" id="CHEBI:18420"/>
        <label>2</label>
    </ligand>
</feature>
<keyword id="KW-0030">Aminoacyl-tRNA synthetase</keyword>
<keyword id="KW-0067">ATP-binding</keyword>
<keyword id="KW-0963">Cytoplasm</keyword>
<keyword id="KW-0436">Ligase</keyword>
<keyword id="KW-0460">Magnesium</keyword>
<keyword id="KW-0479">Metal-binding</keyword>
<keyword id="KW-0547">Nucleotide-binding</keyword>
<keyword id="KW-0648">Protein biosynthesis</keyword>
<dbReference type="EC" id="6.1.1.6" evidence="1"/>
<dbReference type="EMBL" id="CP000419">
    <property type="protein sequence ID" value="ABJ65989.1"/>
    <property type="molecule type" value="Genomic_DNA"/>
</dbReference>
<dbReference type="RefSeq" id="WP_011680974.1">
    <property type="nucleotide sequence ID" value="NC_008532.1"/>
</dbReference>
<dbReference type="SMR" id="Q03LD3"/>
<dbReference type="KEGG" id="ste:STER_0733"/>
<dbReference type="HOGENOM" id="CLU_008255_6_0_9"/>
<dbReference type="GO" id="GO:0005829">
    <property type="term" value="C:cytosol"/>
    <property type="evidence" value="ECO:0007669"/>
    <property type="project" value="TreeGrafter"/>
</dbReference>
<dbReference type="GO" id="GO:0005524">
    <property type="term" value="F:ATP binding"/>
    <property type="evidence" value="ECO:0007669"/>
    <property type="project" value="UniProtKB-UniRule"/>
</dbReference>
<dbReference type="GO" id="GO:0140096">
    <property type="term" value="F:catalytic activity, acting on a protein"/>
    <property type="evidence" value="ECO:0007669"/>
    <property type="project" value="UniProtKB-ARBA"/>
</dbReference>
<dbReference type="GO" id="GO:0004824">
    <property type="term" value="F:lysine-tRNA ligase activity"/>
    <property type="evidence" value="ECO:0007669"/>
    <property type="project" value="UniProtKB-UniRule"/>
</dbReference>
<dbReference type="GO" id="GO:0000287">
    <property type="term" value="F:magnesium ion binding"/>
    <property type="evidence" value="ECO:0007669"/>
    <property type="project" value="UniProtKB-UniRule"/>
</dbReference>
<dbReference type="GO" id="GO:0016740">
    <property type="term" value="F:transferase activity"/>
    <property type="evidence" value="ECO:0007669"/>
    <property type="project" value="UniProtKB-ARBA"/>
</dbReference>
<dbReference type="GO" id="GO:0000049">
    <property type="term" value="F:tRNA binding"/>
    <property type="evidence" value="ECO:0007669"/>
    <property type="project" value="TreeGrafter"/>
</dbReference>
<dbReference type="GO" id="GO:0006430">
    <property type="term" value="P:lysyl-tRNA aminoacylation"/>
    <property type="evidence" value="ECO:0007669"/>
    <property type="project" value="UniProtKB-UniRule"/>
</dbReference>
<dbReference type="CDD" id="cd00775">
    <property type="entry name" value="LysRS_core"/>
    <property type="match status" value="1"/>
</dbReference>
<dbReference type="CDD" id="cd04322">
    <property type="entry name" value="LysRS_N"/>
    <property type="match status" value="1"/>
</dbReference>
<dbReference type="FunFam" id="2.40.50.140:FF:000024">
    <property type="entry name" value="Lysine--tRNA ligase"/>
    <property type="match status" value="1"/>
</dbReference>
<dbReference type="FunFam" id="3.30.930.10:FF:000001">
    <property type="entry name" value="Lysine--tRNA ligase"/>
    <property type="match status" value="1"/>
</dbReference>
<dbReference type="Gene3D" id="3.30.930.10">
    <property type="entry name" value="Bira Bifunctional Protein, Domain 2"/>
    <property type="match status" value="1"/>
</dbReference>
<dbReference type="Gene3D" id="2.40.50.140">
    <property type="entry name" value="Nucleic acid-binding proteins"/>
    <property type="match status" value="1"/>
</dbReference>
<dbReference type="HAMAP" id="MF_00252">
    <property type="entry name" value="Lys_tRNA_synth_class2"/>
    <property type="match status" value="1"/>
</dbReference>
<dbReference type="InterPro" id="IPR004364">
    <property type="entry name" value="Aa-tRNA-synt_II"/>
</dbReference>
<dbReference type="InterPro" id="IPR006195">
    <property type="entry name" value="aa-tRNA-synth_II"/>
</dbReference>
<dbReference type="InterPro" id="IPR045864">
    <property type="entry name" value="aa-tRNA-synth_II/BPL/LPL"/>
</dbReference>
<dbReference type="InterPro" id="IPR002313">
    <property type="entry name" value="Lys-tRNA-ligase_II"/>
</dbReference>
<dbReference type="InterPro" id="IPR044136">
    <property type="entry name" value="Lys-tRNA-ligase_II_N"/>
</dbReference>
<dbReference type="InterPro" id="IPR018149">
    <property type="entry name" value="Lys-tRNA-synth_II_C"/>
</dbReference>
<dbReference type="InterPro" id="IPR012340">
    <property type="entry name" value="NA-bd_OB-fold"/>
</dbReference>
<dbReference type="InterPro" id="IPR004365">
    <property type="entry name" value="NA-bd_OB_tRNA"/>
</dbReference>
<dbReference type="NCBIfam" id="TIGR00499">
    <property type="entry name" value="lysS_bact"/>
    <property type="match status" value="1"/>
</dbReference>
<dbReference type="NCBIfam" id="NF001756">
    <property type="entry name" value="PRK00484.1"/>
    <property type="match status" value="1"/>
</dbReference>
<dbReference type="PANTHER" id="PTHR42918:SF15">
    <property type="entry name" value="LYSINE--TRNA LIGASE, CHLOROPLASTIC_MITOCHONDRIAL"/>
    <property type="match status" value="1"/>
</dbReference>
<dbReference type="PANTHER" id="PTHR42918">
    <property type="entry name" value="LYSYL-TRNA SYNTHETASE"/>
    <property type="match status" value="1"/>
</dbReference>
<dbReference type="Pfam" id="PF00152">
    <property type="entry name" value="tRNA-synt_2"/>
    <property type="match status" value="1"/>
</dbReference>
<dbReference type="Pfam" id="PF01336">
    <property type="entry name" value="tRNA_anti-codon"/>
    <property type="match status" value="1"/>
</dbReference>
<dbReference type="PRINTS" id="PR00982">
    <property type="entry name" value="TRNASYNTHLYS"/>
</dbReference>
<dbReference type="SUPFAM" id="SSF55681">
    <property type="entry name" value="Class II aaRS and biotin synthetases"/>
    <property type="match status" value="1"/>
</dbReference>
<dbReference type="SUPFAM" id="SSF50249">
    <property type="entry name" value="Nucleic acid-binding proteins"/>
    <property type="match status" value="1"/>
</dbReference>
<dbReference type="PROSITE" id="PS50862">
    <property type="entry name" value="AA_TRNA_LIGASE_II"/>
    <property type="match status" value="1"/>
</dbReference>
<reference key="1">
    <citation type="journal article" date="2006" name="Proc. Natl. Acad. Sci. U.S.A.">
        <title>Comparative genomics of the lactic acid bacteria.</title>
        <authorList>
            <person name="Makarova K.S."/>
            <person name="Slesarev A."/>
            <person name="Wolf Y.I."/>
            <person name="Sorokin A."/>
            <person name="Mirkin B."/>
            <person name="Koonin E.V."/>
            <person name="Pavlov A."/>
            <person name="Pavlova N."/>
            <person name="Karamychev V."/>
            <person name="Polouchine N."/>
            <person name="Shakhova V."/>
            <person name="Grigoriev I."/>
            <person name="Lou Y."/>
            <person name="Rohksar D."/>
            <person name="Lucas S."/>
            <person name="Huang K."/>
            <person name="Goodstein D.M."/>
            <person name="Hawkins T."/>
            <person name="Plengvidhya V."/>
            <person name="Welker D."/>
            <person name="Hughes J."/>
            <person name="Goh Y."/>
            <person name="Benson A."/>
            <person name="Baldwin K."/>
            <person name="Lee J.-H."/>
            <person name="Diaz-Muniz I."/>
            <person name="Dosti B."/>
            <person name="Smeianov V."/>
            <person name="Wechter W."/>
            <person name="Barabote R."/>
            <person name="Lorca G."/>
            <person name="Altermann E."/>
            <person name="Barrangou R."/>
            <person name="Ganesan B."/>
            <person name="Xie Y."/>
            <person name="Rawsthorne H."/>
            <person name="Tamir D."/>
            <person name="Parker C."/>
            <person name="Breidt F."/>
            <person name="Broadbent J.R."/>
            <person name="Hutkins R."/>
            <person name="O'Sullivan D."/>
            <person name="Steele J."/>
            <person name="Unlu G."/>
            <person name="Saier M.H. Jr."/>
            <person name="Klaenhammer T."/>
            <person name="Richardson P."/>
            <person name="Kozyavkin S."/>
            <person name="Weimer B.C."/>
            <person name="Mills D.A."/>
        </authorList>
    </citation>
    <scope>NUCLEOTIDE SEQUENCE [LARGE SCALE GENOMIC DNA]</scope>
    <source>
        <strain>ATCC BAA-491 / LMD-9</strain>
    </source>
</reference>